<name>SYCP3_BOVIN</name>
<comment type="function">
    <text evidence="1">Component of the synaptonemal complexes (SCS), formed between homologous chromosomes during meiotic prophase. Required for centromere pairing during meiosis in male germ cells. Required for normal meiosis during spermatogenesis and male fertility. Plays a lesser role in female fertility. Required for efficient phosphorylation of HORMAD1 and HORMAD2.</text>
</comment>
<comment type="subunit">
    <text evidence="1 4">Component of the lateral elements of synaptonemal complexes (By similarity). Homotetramer; the tetrameric helix bundles assemble end to end into long homopolimeric fibers that exhibit a transversal striation with a periodicity of about 20 nm (in vitro) (By similarity). Interacts with SYCP2 (By similarity). Forms a complex with EWSR1, PRDM9, REC8 and SYCP1; complex formation is dependent of phosphorylated form of REC8 and requires PRDM9 bound to hotspot DNA; EWSR1 joins PRDM9 with the chromosomal axis through REC8 (By similarity).</text>
</comment>
<comment type="subcellular location">
    <subcellularLocation>
        <location evidence="2">Nucleus</location>
    </subcellularLocation>
    <subcellularLocation>
        <location evidence="2">Chromosome</location>
    </subcellularLocation>
    <subcellularLocation>
        <location evidence="2">Chromosome</location>
        <location evidence="2">Centromere</location>
    </subcellularLocation>
    <text evidence="2">It is present in early unpaired cores, in the lateral domains of the synaptonemal complex and in the chromosome cores when they separate at diplotene. It is found axial to the metaphase I chromosomes and in association with pairs of sister centromeres. The centromere-associated protein becomes dissociated from the centromeres at anaphase II and is not found in mitotic metaphase centromeres.</text>
</comment>
<comment type="domain">
    <text evidence="4">Composed of a long central coiled coil domain. The N-terminal and C-terminal regions interact with DNA.</text>
</comment>
<comment type="PTM">
    <text evidence="1">Phosphorylated.</text>
</comment>
<comment type="similarity">
    <text evidence="7">Belongs to the XLR/SYCP3 family.</text>
</comment>
<gene>
    <name type="primary">SYCP3</name>
</gene>
<sequence>MVPSGRKHSGKLAKPSVGDQAIRAYEFEQEDKKDLSGSEEDAIEEKTPTLEKQGKKRTSAAVEDMGGEVQNMLERFGADINKSLLAKRKRLEMYTKASLKTSNQKLENVWKIQQEQRQKLNQEYSQQFLTLFQQWDIDMQKAEEQEEKLANLFRQQQKVFQQSRIVQSQRLKTIRQLYEQFIKSMEDLEKNHENLLTGAQNELKKEMALLQKKIMMETVSCYSEL</sequence>
<dbReference type="EMBL" id="BC102433">
    <property type="protein sequence ID" value="AAI02434.1"/>
    <property type="molecule type" value="mRNA"/>
</dbReference>
<dbReference type="RefSeq" id="NP_001035678.1">
    <property type="nucleotide sequence ID" value="NM_001040588.2"/>
</dbReference>
<dbReference type="SMR" id="Q3T0E2"/>
<dbReference type="FunCoup" id="Q3T0E2">
    <property type="interactions" value="95"/>
</dbReference>
<dbReference type="STRING" id="9913.ENSBTAP00000071106"/>
<dbReference type="PaxDb" id="9913-ENSBTAP00000027778"/>
<dbReference type="GeneID" id="615896"/>
<dbReference type="KEGG" id="bta:615896"/>
<dbReference type="CTD" id="50511"/>
<dbReference type="eggNOG" id="ENOG502R883">
    <property type="taxonomic scope" value="Eukaryota"/>
</dbReference>
<dbReference type="InParanoid" id="Q3T0E2"/>
<dbReference type="OrthoDB" id="9621324at2759"/>
<dbReference type="Proteomes" id="UP000009136">
    <property type="component" value="Unplaced"/>
</dbReference>
<dbReference type="GO" id="GO:0005694">
    <property type="term" value="C:chromosome"/>
    <property type="evidence" value="ECO:0000250"/>
    <property type="project" value="UniProtKB"/>
</dbReference>
<dbReference type="GO" id="GO:0000775">
    <property type="term" value="C:chromosome, centromeric region"/>
    <property type="evidence" value="ECO:0000250"/>
    <property type="project" value="UniProtKB"/>
</dbReference>
<dbReference type="GO" id="GO:0000800">
    <property type="term" value="C:lateral element"/>
    <property type="evidence" value="ECO:0000250"/>
    <property type="project" value="UniProtKB"/>
</dbReference>
<dbReference type="GO" id="GO:0000795">
    <property type="term" value="C:synaptonemal complex"/>
    <property type="evidence" value="ECO:0000318"/>
    <property type="project" value="GO_Central"/>
</dbReference>
<dbReference type="GO" id="GO:0003677">
    <property type="term" value="F:DNA binding"/>
    <property type="evidence" value="ECO:0007669"/>
    <property type="project" value="UniProtKB-KW"/>
</dbReference>
<dbReference type="GO" id="GO:0051301">
    <property type="term" value="P:cell division"/>
    <property type="evidence" value="ECO:0007669"/>
    <property type="project" value="UniProtKB-KW"/>
</dbReference>
<dbReference type="GO" id="GO:0051321">
    <property type="term" value="P:meiotic cell cycle"/>
    <property type="evidence" value="ECO:0000318"/>
    <property type="project" value="GO_Central"/>
</dbReference>
<dbReference type="GO" id="GO:0007286">
    <property type="term" value="P:spermatid development"/>
    <property type="evidence" value="ECO:0000318"/>
    <property type="project" value="GO_Central"/>
</dbReference>
<dbReference type="InterPro" id="IPR051443">
    <property type="entry name" value="XLR/SYCP3"/>
</dbReference>
<dbReference type="InterPro" id="IPR006888">
    <property type="entry name" value="XLR/SYCP3/FAM9_dom"/>
</dbReference>
<dbReference type="PANTHER" id="PTHR19368">
    <property type="entry name" value="XLR/SCP3/FAM9"/>
    <property type="match status" value="1"/>
</dbReference>
<dbReference type="PANTHER" id="PTHR19368:SF15">
    <property type="entry name" value="XLR_SYCP3_FAM9 DOMAIN-CONTAINING PROTEIN"/>
    <property type="match status" value="1"/>
</dbReference>
<dbReference type="Pfam" id="PF04803">
    <property type="entry name" value="Cor1"/>
    <property type="match status" value="1"/>
</dbReference>
<organism>
    <name type="scientific">Bos taurus</name>
    <name type="common">Bovine</name>
    <dbReference type="NCBI Taxonomy" id="9913"/>
    <lineage>
        <taxon>Eukaryota</taxon>
        <taxon>Metazoa</taxon>
        <taxon>Chordata</taxon>
        <taxon>Craniata</taxon>
        <taxon>Vertebrata</taxon>
        <taxon>Euteleostomi</taxon>
        <taxon>Mammalia</taxon>
        <taxon>Eutheria</taxon>
        <taxon>Laurasiatheria</taxon>
        <taxon>Artiodactyla</taxon>
        <taxon>Ruminantia</taxon>
        <taxon>Pecora</taxon>
        <taxon>Bovidae</taxon>
        <taxon>Bovinae</taxon>
        <taxon>Bos</taxon>
    </lineage>
</organism>
<evidence type="ECO:0000250" key="1">
    <source>
        <dbReference type="UniProtKB" id="P70281"/>
    </source>
</evidence>
<evidence type="ECO:0000250" key="2">
    <source>
        <dbReference type="UniProtKB" id="Q60547"/>
    </source>
</evidence>
<evidence type="ECO:0000250" key="3">
    <source>
        <dbReference type="UniProtKB" id="Q63520"/>
    </source>
</evidence>
<evidence type="ECO:0000250" key="4">
    <source>
        <dbReference type="UniProtKB" id="Q8IZU3"/>
    </source>
</evidence>
<evidence type="ECO:0000255" key="5"/>
<evidence type="ECO:0000256" key="6">
    <source>
        <dbReference type="SAM" id="MobiDB-lite"/>
    </source>
</evidence>
<evidence type="ECO:0000305" key="7"/>
<proteinExistence type="evidence at transcript level"/>
<protein>
    <recommendedName>
        <fullName>Synaptonemal complex protein 3</fullName>
        <shortName>SCP-3</shortName>
    </recommendedName>
</protein>
<feature type="chain" id="PRO_0000229023" description="Synaptonemal complex protein 3">
    <location>
        <begin position="1"/>
        <end position="225"/>
    </location>
</feature>
<feature type="region of interest" description="Disordered" evidence="6">
    <location>
        <begin position="1"/>
        <end position="59"/>
    </location>
</feature>
<feature type="region of interest" description="Interaction with DNA" evidence="4">
    <location>
        <begin position="52"/>
        <end position="57"/>
    </location>
</feature>
<feature type="region of interest" description="Important for oligomerization and fiber formation" evidence="4">
    <location>
        <begin position="68"/>
        <end position="73"/>
    </location>
</feature>
<feature type="region of interest" description="Interaction with DNA" evidence="4">
    <location>
        <begin position="87"/>
        <end position="90"/>
    </location>
</feature>
<feature type="coiled-coil region" evidence="4 5">
    <location>
        <begin position="65"/>
        <end position="218"/>
    </location>
</feature>
<feature type="short sequence motif" description="Nuclear localization signal" evidence="5">
    <location>
        <begin position="87"/>
        <end position="90"/>
    </location>
</feature>
<feature type="compositionally biased region" description="Basic residues" evidence="6">
    <location>
        <begin position="1"/>
        <end position="11"/>
    </location>
</feature>
<feature type="compositionally biased region" description="Basic and acidic residues" evidence="6">
    <location>
        <begin position="44"/>
        <end position="53"/>
    </location>
</feature>
<feature type="modified residue" description="Phosphoserine" evidence="1">
    <location>
        <position position="36"/>
    </location>
</feature>
<feature type="modified residue" description="Phosphoserine" evidence="3">
    <location>
        <position position="38"/>
    </location>
</feature>
<keyword id="KW-0131">Cell cycle</keyword>
<keyword id="KW-0132">Cell division</keyword>
<keyword id="KW-0137">Centromere</keyword>
<keyword id="KW-0158">Chromosome</keyword>
<keyword id="KW-0175">Coiled coil</keyword>
<keyword id="KW-0238">DNA-binding</keyword>
<keyword id="KW-0469">Meiosis</keyword>
<keyword id="KW-0539">Nucleus</keyword>
<keyword id="KW-0597">Phosphoprotein</keyword>
<keyword id="KW-1185">Reference proteome</keyword>
<reference key="1">
    <citation type="submission" date="2005-08" db="EMBL/GenBank/DDBJ databases">
        <authorList>
            <consortium name="NIH - Mammalian Gene Collection (MGC) project"/>
        </authorList>
    </citation>
    <scope>NUCLEOTIDE SEQUENCE [LARGE SCALE MRNA]</scope>
    <source>
        <strain>Crossbred X Angus</strain>
        <tissue>Ileum</tissue>
    </source>
</reference>
<accession>Q3T0E2</accession>